<gene>
    <name evidence="1" type="primary">efp</name>
    <name type="ordered locus">DSY2377</name>
</gene>
<name>EFP_DESHY</name>
<evidence type="ECO:0000255" key="1">
    <source>
        <dbReference type="HAMAP-Rule" id="MF_00141"/>
    </source>
</evidence>
<organism>
    <name type="scientific">Desulfitobacterium hafniense (strain Y51)</name>
    <dbReference type="NCBI Taxonomy" id="138119"/>
    <lineage>
        <taxon>Bacteria</taxon>
        <taxon>Bacillati</taxon>
        <taxon>Bacillota</taxon>
        <taxon>Clostridia</taxon>
        <taxon>Eubacteriales</taxon>
        <taxon>Desulfitobacteriaceae</taxon>
        <taxon>Desulfitobacterium</taxon>
    </lineage>
</organism>
<keyword id="KW-0963">Cytoplasm</keyword>
<keyword id="KW-0251">Elongation factor</keyword>
<keyword id="KW-0648">Protein biosynthesis</keyword>
<keyword id="KW-1185">Reference proteome</keyword>
<feature type="chain" id="PRO_1000010731" description="Elongation factor P">
    <location>
        <begin position="1"/>
        <end position="185"/>
    </location>
</feature>
<sequence length="185" mass="20398">MISSNEFKTGLTIEVDNDVYTIIEFQHVKPGKGAAFVRTKLKNVKTGGITERKFNAGEKVPKAHVERREMQYLYKDGDHFVAMDNETYEQTSLTEAQIGDGVKYLKENMNLGILFFNGTVIGVDLPNTVILEVAHTEPGVRGDTATGGSKPATLETGAVVQVPFFVNEGEKLIIDTRTGNYVQRA</sequence>
<reference key="1">
    <citation type="journal article" date="2006" name="J. Bacteriol.">
        <title>Complete genome sequence of the dehalorespiring bacterium Desulfitobacterium hafniense Y51 and comparison with Dehalococcoides ethenogenes 195.</title>
        <authorList>
            <person name="Nonaka H."/>
            <person name="Keresztes G."/>
            <person name="Shinoda Y."/>
            <person name="Ikenaga Y."/>
            <person name="Abe M."/>
            <person name="Naito K."/>
            <person name="Inatomi K."/>
            <person name="Furukawa K."/>
            <person name="Inui M."/>
            <person name="Yukawa H."/>
        </authorList>
    </citation>
    <scope>NUCLEOTIDE SEQUENCE [LARGE SCALE GENOMIC DNA]</scope>
    <source>
        <strain>Y51</strain>
    </source>
</reference>
<accession>Q24UX6</accession>
<comment type="function">
    <text evidence="1">Involved in peptide bond synthesis. Stimulates efficient translation and peptide-bond synthesis on native or reconstituted 70S ribosomes in vitro. Probably functions indirectly by altering the affinity of the ribosome for aminoacyl-tRNA, thus increasing their reactivity as acceptors for peptidyl transferase.</text>
</comment>
<comment type="pathway">
    <text evidence="1">Protein biosynthesis; polypeptide chain elongation.</text>
</comment>
<comment type="subcellular location">
    <subcellularLocation>
        <location evidence="1">Cytoplasm</location>
    </subcellularLocation>
</comment>
<comment type="similarity">
    <text evidence="1">Belongs to the elongation factor P family.</text>
</comment>
<protein>
    <recommendedName>
        <fullName evidence="1">Elongation factor P</fullName>
        <shortName evidence="1">EF-P</shortName>
    </recommendedName>
</protein>
<proteinExistence type="inferred from homology"/>
<dbReference type="EMBL" id="AP008230">
    <property type="protein sequence ID" value="BAE84166.1"/>
    <property type="molecule type" value="Genomic_DNA"/>
</dbReference>
<dbReference type="RefSeq" id="WP_005810907.1">
    <property type="nucleotide sequence ID" value="NC_007907.1"/>
</dbReference>
<dbReference type="SMR" id="Q24UX6"/>
<dbReference type="STRING" id="138119.DSY2377"/>
<dbReference type="KEGG" id="dsy:DSY2377"/>
<dbReference type="eggNOG" id="COG0231">
    <property type="taxonomic scope" value="Bacteria"/>
</dbReference>
<dbReference type="HOGENOM" id="CLU_074944_0_1_9"/>
<dbReference type="UniPathway" id="UPA00345"/>
<dbReference type="Proteomes" id="UP000001946">
    <property type="component" value="Chromosome"/>
</dbReference>
<dbReference type="GO" id="GO:0005737">
    <property type="term" value="C:cytoplasm"/>
    <property type="evidence" value="ECO:0007669"/>
    <property type="project" value="UniProtKB-SubCell"/>
</dbReference>
<dbReference type="GO" id="GO:0003746">
    <property type="term" value="F:translation elongation factor activity"/>
    <property type="evidence" value="ECO:0007669"/>
    <property type="project" value="UniProtKB-UniRule"/>
</dbReference>
<dbReference type="GO" id="GO:0043043">
    <property type="term" value="P:peptide biosynthetic process"/>
    <property type="evidence" value="ECO:0007669"/>
    <property type="project" value="InterPro"/>
</dbReference>
<dbReference type="CDD" id="cd04470">
    <property type="entry name" value="S1_EF-P_repeat_1"/>
    <property type="match status" value="1"/>
</dbReference>
<dbReference type="CDD" id="cd05794">
    <property type="entry name" value="S1_EF-P_repeat_2"/>
    <property type="match status" value="1"/>
</dbReference>
<dbReference type="FunFam" id="2.30.30.30:FF:000003">
    <property type="entry name" value="Elongation factor P"/>
    <property type="match status" value="1"/>
</dbReference>
<dbReference type="FunFam" id="2.40.50.140:FF:000004">
    <property type="entry name" value="Elongation factor P"/>
    <property type="match status" value="1"/>
</dbReference>
<dbReference type="FunFam" id="2.40.50.140:FF:000009">
    <property type="entry name" value="Elongation factor P"/>
    <property type="match status" value="1"/>
</dbReference>
<dbReference type="Gene3D" id="2.30.30.30">
    <property type="match status" value="1"/>
</dbReference>
<dbReference type="Gene3D" id="2.40.50.140">
    <property type="entry name" value="Nucleic acid-binding proteins"/>
    <property type="match status" value="2"/>
</dbReference>
<dbReference type="HAMAP" id="MF_00141">
    <property type="entry name" value="EF_P"/>
    <property type="match status" value="1"/>
</dbReference>
<dbReference type="InterPro" id="IPR015365">
    <property type="entry name" value="Elong-fact-P_C"/>
</dbReference>
<dbReference type="InterPro" id="IPR012340">
    <property type="entry name" value="NA-bd_OB-fold"/>
</dbReference>
<dbReference type="InterPro" id="IPR014722">
    <property type="entry name" value="Rib_uL2_dom2"/>
</dbReference>
<dbReference type="InterPro" id="IPR020599">
    <property type="entry name" value="Transl_elong_fac_P/YeiP"/>
</dbReference>
<dbReference type="InterPro" id="IPR013185">
    <property type="entry name" value="Transl_elong_KOW-like"/>
</dbReference>
<dbReference type="InterPro" id="IPR001059">
    <property type="entry name" value="Transl_elong_P/YeiP_cen"/>
</dbReference>
<dbReference type="InterPro" id="IPR013852">
    <property type="entry name" value="Transl_elong_P/YeiP_CS"/>
</dbReference>
<dbReference type="InterPro" id="IPR011768">
    <property type="entry name" value="Transl_elongation_fac_P"/>
</dbReference>
<dbReference type="InterPro" id="IPR008991">
    <property type="entry name" value="Translation_prot_SH3-like_sf"/>
</dbReference>
<dbReference type="NCBIfam" id="TIGR00038">
    <property type="entry name" value="efp"/>
    <property type="match status" value="1"/>
</dbReference>
<dbReference type="NCBIfam" id="NF001810">
    <property type="entry name" value="PRK00529.1"/>
    <property type="match status" value="1"/>
</dbReference>
<dbReference type="PANTHER" id="PTHR30053">
    <property type="entry name" value="ELONGATION FACTOR P"/>
    <property type="match status" value="1"/>
</dbReference>
<dbReference type="PANTHER" id="PTHR30053:SF12">
    <property type="entry name" value="ELONGATION FACTOR P (EF-P) FAMILY PROTEIN"/>
    <property type="match status" value="1"/>
</dbReference>
<dbReference type="Pfam" id="PF01132">
    <property type="entry name" value="EFP"/>
    <property type="match status" value="1"/>
</dbReference>
<dbReference type="Pfam" id="PF08207">
    <property type="entry name" value="EFP_N"/>
    <property type="match status" value="1"/>
</dbReference>
<dbReference type="Pfam" id="PF09285">
    <property type="entry name" value="Elong-fact-P_C"/>
    <property type="match status" value="1"/>
</dbReference>
<dbReference type="PIRSF" id="PIRSF005901">
    <property type="entry name" value="EF-P"/>
    <property type="match status" value="1"/>
</dbReference>
<dbReference type="SMART" id="SM01185">
    <property type="entry name" value="EFP"/>
    <property type="match status" value="1"/>
</dbReference>
<dbReference type="SMART" id="SM00841">
    <property type="entry name" value="Elong-fact-P_C"/>
    <property type="match status" value="1"/>
</dbReference>
<dbReference type="SUPFAM" id="SSF50249">
    <property type="entry name" value="Nucleic acid-binding proteins"/>
    <property type="match status" value="2"/>
</dbReference>
<dbReference type="SUPFAM" id="SSF50104">
    <property type="entry name" value="Translation proteins SH3-like domain"/>
    <property type="match status" value="1"/>
</dbReference>
<dbReference type="PROSITE" id="PS01275">
    <property type="entry name" value="EFP"/>
    <property type="match status" value="1"/>
</dbReference>